<organism>
    <name type="scientific">Acinetobacter baumannii (strain AB0057)</name>
    <dbReference type="NCBI Taxonomy" id="480119"/>
    <lineage>
        <taxon>Bacteria</taxon>
        <taxon>Pseudomonadati</taxon>
        <taxon>Pseudomonadota</taxon>
        <taxon>Gammaproteobacteria</taxon>
        <taxon>Moraxellales</taxon>
        <taxon>Moraxellaceae</taxon>
        <taxon>Acinetobacter</taxon>
        <taxon>Acinetobacter calcoaceticus/baumannii complex</taxon>
    </lineage>
</organism>
<dbReference type="EMBL" id="CP001182">
    <property type="protein sequence ID" value="ACJ39827.1"/>
    <property type="molecule type" value="Genomic_DNA"/>
</dbReference>
<dbReference type="RefSeq" id="WP_001979301.1">
    <property type="nucleotide sequence ID" value="NC_011586.2"/>
</dbReference>
<dbReference type="SMR" id="B7I3Q5"/>
<dbReference type="KEGG" id="abn:AB57_0401"/>
<dbReference type="HOGENOM" id="CLU_057596_1_0_6"/>
<dbReference type="Proteomes" id="UP000007094">
    <property type="component" value="Chromosome"/>
</dbReference>
<dbReference type="GO" id="GO:0005829">
    <property type="term" value="C:cytosol"/>
    <property type="evidence" value="ECO:0007669"/>
    <property type="project" value="TreeGrafter"/>
</dbReference>
<dbReference type="Gene3D" id="3.40.1740.10">
    <property type="entry name" value="VC0467-like"/>
    <property type="match status" value="1"/>
</dbReference>
<dbReference type="HAMAP" id="MF_00758">
    <property type="entry name" value="UPF0301"/>
    <property type="match status" value="1"/>
</dbReference>
<dbReference type="InterPro" id="IPR003774">
    <property type="entry name" value="AlgH-like"/>
</dbReference>
<dbReference type="NCBIfam" id="NF001266">
    <property type="entry name" value="PRK00228.1-1"/>
    <property type="match status" value="1"/>
</dbReference>
<dbReference type="PANTHER" id="PTHR30327">
    <property type="entry name" value="UNCHARACTERIZED PROTEIN YQGE"/>
    <property type="match status" value="1"/>
</dbReference>
<dbReference type="PANTHER" id="PTHR30327:SF1">
    <property type="entry name" value="UPF0301 PROTEIN YQGE"/>
    <property type="match status" value="1"/>
</dbReference>
<dbReference type="Pfam" id="PF02622">
    <property type="entry name" value="DUF179"/>
    <property type="match status" value="1"/>
</dbReference>
<dbReference type="SUPFAM" id="SSF143456">
    <property type="entry name" value="VC0467-like"/>
    <property type="match status" value="1"/>
</dbReference>
<name>Y401_ACIB5</name>
<feature type="chain" id="PRO_1000198244" description="UPF0301 protein AB57_0401">
    <location>
        <begin position="1"/>
        <end position="184"/>
    </location>
</feature>
<gene>
    <name type="ordered locus">AB57_0401</name>
</gene>
<evidence type="ECO:0000255" key="1">
    <source>
        <dbReference type="HAMAP-Rule" id="MF_00758"/>
    </source>
</evidence>
<reference key="1">
    <citation type="journal article" date="2008" name="J. Bacteriol.">
        <title>Comparative genome sequence analysis of multidrug-resistant Acinetobacter baumannii.</title>
        <authorList>
            <person name="Adams M.D."/>
            <person name="Goglin K."/>
            <person name="Molyneaux N."/>
            <person name="Hujer K.M."/>
            <person name="Lavender H."/>
            <person name="Jamison J.J."/>
            <person name="MacDonald I.J."/>
            <person name="Martin K.M."/>
            <person name="Russo T."/>
            <person name="Campagnari A.A."/>
            <person name="Hujer A.M."/>
            <person name="Bonomo R.A."/>
            <person name="Gill S.R."/>
        </authorList>
    </citation>
    <scope>NUCLEOTIDE SEQUENCE [LARGE SCALE GENOMIC DNA]</scope>
    <source>
        <strain>AB0057</strain>
    </source>
</reference>
<accession>B7I3Q5</accession>
<protein>
    <recommendedName>
        <fullName evidence="1">UPF0301 protein AB57_0401</fullName>
    </recommendedName>
</protein>
<sequence length="184" mass="20500">MTKQYMTHRCLIAPPEMADDFFANTVIYLARHDEEGAQGIIINRPAGIQIKELLNDLDIDADNVNPHEVLQGGPLRPEAGFVLHTGQPTWHSSIAVGENVCITTSKDILDAIAHNEGVGRYQIALGYASWGKNQLEDEIARGDWLICDADMDLIFNLPYDDRWDAAYKKIGVDRTWLASEIGHA</sequence>
<proteinExistence type="inferred from homology"/>
<comment type="similarity">
    <text evidence="1">Belongs to the UPF0301 (AlgH) family.</text>
</comment>